<proteinExistence type="inferred from homology"/>
<accession>P22385</accession>
<organism>
    <name type="scientific">Simian immunodeficiency virus (isolate GB1)</name>
    <name type="common">SIV-mnd</name>
    <name type="synonym">Simian immunodeficiency virus mandrill</name>
    <dbReference type="NCBI Taxonomy" id="11732"/>
    <lineage>
        <taxon>Viruses</taxon>
        <taxon>Riboviria</taxon>
        <taxon>Pararnavirae</taxon>
        <taxon>Artverviricota</taxon>
        <taxon>Revtraviricetes</taxon>
        <taxon>Ortervirales</taxon>
        <taxon>Retroviridae</taxon>
        <taxon>Orthoretrovirinae</taxon>
        <taxon>Lentivirus</taxon>
        <taxon>Simian immunodeficiency virus</taxon>
    </lineage>
</organism>
<dbReference type="EMBL" id="M27470">
    <property type="protein sequence ID" value="AAB49571.1"/>
    <property type="molecule type" value="Genomic_RNA"/>
</dbReference>
<dbReference type="SMR" id="P22385"/>
<dbReference type="Proteomes" id="UP000259373">
    <property type="component" value="Segment"/>
</dbReference>
<dbReference type="GO" id="GO:0043657">
    <property type="term" value="C:host cell"/>
    <property type="evidence" value="ECO:0007669"/>
    <property type="project" value="GOC"/>
</dbReference>
<dbReference type="GO" id="GO:0042025">
    <property type="term" value="C:host cell nucleus"/>
    <property type="evidence" value="ECO:0007669"/>
    <property type="project" value="UniProtKB-SubCell"/>
</dbReference>
<dbReference type="GO" id="GO:0044423">
    <property type="term" value="C:virion component"/>
    <property type="evidence" value="ECO:0007669"/>
    <property type="project" value="UniProtKB-KW"/>
</dbReference>
<dbReference type="GO" id="GO:0046718">
    <property type="term" value="P:symbiont entry into host cell"/>
    <property type="evidence" value="ECO:0007669"/>
    <property type="project" value="UniProtKB-KW"/>
</dbReference>
<dbReference type="GO" id="GO:0075732">
    <property type="term" value="P:viral penetration into host nucleus"/>
    <property type="evidence" value="ECO:0007669"/>
    <property type="project" value="UniProtKB-KW"/>
</dbReference>
<dbReference type="Gene3D" id="1.20.5.4730">
    <property type="match status" value="1"/>
</dbReference>
<dbReference type="InterPro" id="IPR053711">
    <property type="entry name" value="Lentiviral_Vpx_assoc_factor"/>
</dbReference>
<dbReference type="InterPro" id="IPR000012">
    <property type="entry name" value="RetroV_VpR/X"/>
</dbReference>
<dbReference type="Pfam" id="PF00522">
    <property type="entry name" value="VPR"/>
    <property type="match status" value="1"/>
</dbReference>
<reference key="1">
    <citation type="journal article" date="1989" name="Nature">
        <title>Sequence of a novel simian immunodeficiency virus from a wild-caught African mandrill.</title>
        <authorList>
            <person name="Tsujimoto H."/>
            <person name="Hasegawa A."/>
            <person name="Maki N."/>
            <person name="Fukasawa M."/>
            <person name="Miura T."/>
            <person name="Speidel S."/>
            <person name="Cooper R.W."/>
            <person name="Moriyama E.N."/>
            <person name="Gojobori T."/>
            <person name="Hayami M."/>
        </authorList>
    </citation>
    <scope>NUCLEOTIDE SEQUENCE [GENOMIC RNA]</scope>
</reference>
<feature type="chain" id="PRO_0000085465" description="Protein Vpr">
    <location>
        <begin position="1"/>
        <end position="104"/>
    </location>
</feature>
<feature type="region of interest" description="Disordered" evidence="2">
    <location>
        <begin position="1"/>
        <end position="21"/>
    </location>
</feature>
<feature type="region of interest" description="Disordered" evidence="2">
    <location>
        <begin position="85"/>
        <end position="104"/>
    </location>
</feature>
<protein>
    <recommendedName>
        <fullName>Protein Vpr</fullName>
    </recommendedName>
    <alternativeName>
        <fullName>R ORF protein</fullName>
    </alternativeName>
    <alternativeName>
        <fullName>Viral protein R</fullName>
    </alternativeName>
</protein>
<evidence type="ECO:0000250" key="1"/>
<evidence type="ECO:0000256" key="2">
    <source>
        <dbReference type="SAM" id="MobiDB-lite"/>
    </source>
</evidence>
<sequence length="104" mass="12075">MGQKRDEQVSEDQGPPREPYNQWLADTMEEIKEEARKHFPLIILNAVSEYCVQNTGSEEEACEKFITLMNRAIWVHLAQGCDGTFRERRPQLPPSGFRPRGDRL</sequence>
<gene>
    <name type="primary">vpr</name>
</gene>
<comment type="function">
    <text evidence="1">Stimulates gene expression driven by the HIV-2 LTR. Prevents infected cells from undergoing mitosis and proliferating, by inducing arrest or delay in the G2 phase of the cell cycle. Cell cycle arrest creates a favorable environment for maximizing viral expression and production (By similarity).</text>
</comment>
<comment type="subunit">
    <text evidence="1">Interacts with human UNG.</text>
</comment>
<comment type="subcellular location">
    <subcellularLocation>
        <location>Virion</location>
    </subcellularLocation>
    <subcellularLocation>
        <location evidence="1">Host nucleus</location>
    </subcellularLocation>
</comment>
<comment type="miscellaneous">
    <text>This is an African mandrill isolate.</text>
</comment>
<organismHost>
    <name type="scientific">Cercopithecidae</name>
    <name type="common">Old World monkeys</name>
    <dbReference type="NCBI Taxonomy" id="9527"/>
</organismHost>
<keyword id="KW-0010">Activator</keyword>
<keyword id="KW-0014">AIDS</keyword>
<keyword id="KW-0131">Cell cycle</keyword>
<keyword id="KW-1048">Host nucleus</keyword>
<keyword id="KW-0945">Host-virus interaction</keyword>
<keyword id="KW-0804">Transcription</keyword>
<keyword id="KW-0805">Transcription regulation</keyword>
<keyword id="KW-1163">Viral penetration into host nucleus</keyword>
<keyword id="KW-0946">Virion</keyword>
<keyword id="KW-1160">Virus entry into host cell</keyword>
<name>VPR_SIVGB</name>